<gene>
    <name evidence="1" type="primary">rsmJ</name>
    <name type="ordered locus">VSAL_I2945</name>
</gene>
<accession>B6EGR4</accession>
<dbReference type="EC" id="2.1.1.242" evidence="1"/>
<dbReference type="EMBL" id="FM178379">
    <property type="protein sequence ID" value="CAQ80629.1"/>
    <property type="molecule type" value="Genomic_DNA"/>
</dbReference>
<dbReference type="RefSeq" id="WP_012551356.1">
    <property type="nucleotide sequence ID" value="NC_011312.1"/>
</dbReference>
<dbReference type="SMR" id="B6EGR4"/>
<dbReference type="KEGG" id="vsa:VSAL_I2945"/>
<dbReference type="eggNOG" id="COG0742">
    <property type="taxonomic scope" value="Bacteria"/>
</dbReference>
<dbReference type="HOGENOM" id="CLU_076324_0_0_6"/>
<dbReference type="Proteomes" id="UP000001730">
    <property type="component" value="Chromosome 1"/>
</dbReference>
<dbReference type="GO" id="GO:0005737">
    <property type="term" value="C:cytoplasm"/>
    <property type="evidence" value="ECO:0007669"/>
    <property type="project" value="UniProtKB-SubCell"/>
</dbReference>
<dbReference type="GO" id="GO:0008990">
    <property type="term" value="F:rRNA (guanine-N2-)-methyltransferase activity"/>
    <property type="evidence" value="ECO:0007669"/>
    <property type="project" value="UniProtKB-UniRule"/>
</dbReference>
<dbReference type="Gene3D" id="3.40.50.150">
    <property type="entry name" value="Vaccinia Virus protein VP39"/>
    <property type="match status" value="1"/>
</dbReference>
<dbReference type="Gene3D" id="3.40.1630.10">
    <property type="entry name" value="YhiQ-like domain"/>
    <property type="match status" value="1"/>
</dbReference>
<dbReference type="HAMAP" id="MF_01523">
    <property type="entry name" value="16SrRNA_methyltr_J"/>
    <property type="match status" value="1"/>
</dbReference>
<dbReference type="InterPro" id="IPR007536">
    <property type="entry name" value="16SrRNA_methylTrfase_J"/>
</dbReference>
<dbReference type="InterPro" id="IPR029063">
    <property type="entry name" value="SAM-dependent_MTases_sf"/>
</dbReference>
<dbReference type="PANTHER" id="PTHR36112">
    <property type="entry name" value="RIBOSOMAL RNA SMALL SUBUNIT METHYLTRANSFERASE J"/>
    <property type="match status" value="1"/>
</dbReference>
<dbReference type="PANTHER" id="PTHR36112:SF1">
    <property type="entry name" value="RIBOSOMAL RNA SMALL SUBUNIT METHYLTRANSFERASE J"/>
    <property type="match status" value="1"/>
</dbReference>
<dbReference type="Pfam" id="PF04445">
    <property type="entry name" value="SAM_MT"/>
    <property type="match status" value="1"/>
</dbReference>
<dbReference type="SUPFAM" id="SSF53335">
    <property type="entry name" value="S-adenosyl-L-methionine-dependent methyltransferases"/>
    <property type="match status" value="1"/>
</dbReference>
<sequence>MQIALLCEDLNRQSELEAIATRWGLTHDEDNVFALVLTTQQLELRKRDEPKLGAIFVDLVSGAVAHRRKFGGGKGQSIAKAVGLNKGATPLVLDGTAGLGRDAFVLASLGCKVQMVERHPVVAALLDDGLSRAKHDADIGGWVSQRMSLLHASSHDALEQLMAQDDFVQPDVVYLDPMYPHPENKKKSALVKKEMRVFQSLVGADNDADALLAPALLMATKRVVVKRPDYAEWLDNQKPSMAIETKKNRFDVYVNAGMKS</sequence>
<proteinExistence type="inferred from homology"/>
<protein>
    <recommendedName>
        <fullName evidence="1">Ribosomal RNA small subunit methyltransferase J</fullName>
        <ecNumber evidence="1">2.1.1.242</ecNumber>
    </recommendedName>
    <alternativeName>
        <fullName evidence="1">16S rRNA m2G1516 methyltransferase</fullName>
    </alternativeName>
    <alternativeName>
        <fullName evidence="1">rRNA (guanine-N(2)-)-methyltransferase</fullName>
    </alternativeName>
</protein>
<reference key="1">
    <citation type="journal article" date="2008" name="BMC Genomics">
        <title>The genome sequence of the fish pathogen Aliivibrio salmonicida strain LFI1238 shows extensive evidence of gene decay.</title>
        <authorList>
            <person name="Hjerde E."/>
            <person name="Lorentzen M.S."/>
            <person name="Holden M.T."/>
            <person name="Seeger K."/>
            <person name="Paulsen S."/>
            <person name="Bason N."/>
            <person name="Churcher C."/>
            <person name="Harris D."/>
            <person name="Norbertczak H."/>
            <person name="Quail M.A."/>
            <person name="Sanders S."/>
            <person name="Thurston S."/>
            <person name="Parkhill J."/>
            <person name="Willassen N.P."/>
            <person name="Thomson N.R."/>
        </authorList>
    </citation>
    <scope>NUCLEOTIDE SEQUENCE [LARGE SCALE GENOMIC DNA]</scope>
    <source>
        <strain>LFI1238</strain>
    </source>
</reference>
<organism>
    <name type="scientific">Aliivibrio salmonicida (strain LFI1238)</name>
    <name type="common">Vibrio salmonicida (strain LFI1238)</name>
    <dbReference type="NCBI Taxonomy" id="316275"/>
    <lineage>
        <taxon>Bacteria</taxon>
        <taxon>Pseudomonadati</taxon>
        <taxon>Pseudomonadota</taxon>
        <taxon>Gammaproteobacteria</taxon>
        <taxon>Vibrionales</taxon>
        <taxon>Vibrionaceae</taxon>
        <taxon>Aliivibrio</taxon>
    </lineage>
</organism>
<comment type="function">
    <text evidence="1">Specifically methylates the guanosine in position 1516 of 16S rRNA.</text>
</comment>
<comment type="catalytic activity">
    <reaction evidence="1">
        <text>guanosine(1516) in 16S rRNA + S-adenosyl-L-methionine = N(2)-methylguanosine(1516) in 16S rRNA + S-adenosyl-L-homocysteine + H(+)</text>
        <dbReference type="Rhea" id="RHEA:43220"/>
        <dbReference type="Rhea" id="RHEA-COMP:10412"/>
        <dbReference type="Rhea" id="RHEA-COMP:10413"/>
        <dbReference type="ChEBI" id="CHEBI:15378"/>
        <dbReference type="ChEBI" id="CHEBI:57856"/>
        <dbReference type="ChEBI" id="CHEBI:59789"/>
        <dbReference type="ChEBI" id="CHEBI:74269"/>
        <dbReference type="ChEBI" id="CHEBI:74481"/>
        <dbReference type="EC" id="2.1.1.242"/>
    </reaction>
</comment>
<comment type="subcellular location">
    <subcellularLocation>
        <location evidence="1">Cytoplasm</location>
    </subcellularLocation>
</comment>
<comment type="similarity">
    <text evidence="1">Belongs to the methyltransferase superfamily. RsmJ family.</text>
</comment>
<keyword id="KW-0963">Cytoplasm</keyword>
<keyword id="KW-0489">Methyltransferase</keyword>
<keyword id="KW-0698">rRNA processing</keyword>
<keyword id="KW-0949">S-adenosyl-L-methionine</keyword>
<keyword id="KW-0808">Transferase</keyword>
<evidence type="ECO:0000255" key="1">
    <source>
        <dbReference type="HAMAP-Rule" id="MF_01523"/>
    </source>
</evidence>
<name>RSMJ_ALISL</name>
<feature type="chain" id="PRO_1000198487" description="Ribosomal RNA small subunit methyltransferase J">
    <location>
        <begin position="1"/>
        <end position="260"/>
    </location>
</feature>
<feature type="binding site" evidence="1">
    <location>
        <begin position="101"/>
        <end position="102"/>
    </location>
    <ligand>
        <name>S-adenosyl-L-methionine</name>
        <dbReference type="ChEBI" id="CHEBI:59789"/>
    </ligand>
</feature>
<feature type="binding site" evidence="1">
    <location>
        <begin position="117"/>
        <end position="118"/>
    </location>
    <ligand>
        <name>S-adenosyl-L-methionine</name>
        <dbReference type="ChEBI" id="CHEBI:59789"/>
    </ligand>
</feature>
<feature type="binding site" evidence="1">
    <location>
        <begin position="153"/>
        <end position="154"/>
    </location>
    <ligand>
        <name>S-adenosyl-L-methionine</name>
        <dbReference type="ChEBI" id="CHEBI:59789"/>
    </ligand>
</feature>
<feature type="binding site" evidence="1">
    <location>
        <position position="176"/>
    </location>
    <ligand>
        <name>S-adenosyl-L-methionine</name>
        <dbReference type="ChEBI" id="CHEBI:59789"/>
    </ligand>
</feature>